<dbReference type="EMBL" id="AE001439">
    <property type="protein sequence ID" value="AAD05660.1"/>
    <property type="molecule type" value="Genomic_DNA"/>
</dbReference>
<dbReference type="RefSeq" id="WP_001227269.1">
    <property type="nucleotide sequence ID" value="NZ_CP011330.1"/>
</dbReference>
<dbReference type="SMR" id="P66638"/>
<dbReference type="GeneID" id="93236454"/>
<dbReference type="KEGG" id="hpj:jhp_0076"/>
<dbReference type="PATRIC" id="fig|85963.30.peg.957"/>
<dbReference type="eggNOG" id="COG0103">
    <property type="taxonomic scope" value="Bacteria"/>
</dbReference>
<dbReference type="Proteomes" id="UP000000804">
    <property type="component" value="Chromosome"/>
</dbReference>
<dbReference type="GO" id="GO:0022627">
    <property type="term" value="C:cytosolic small ribosomal subunit"/>
    <property type="evidence" value="ECO:0007669"/>
    <property type="project" value="TreeGrafter"/>
</dbReference>
<dbReference type="GO" id="GO:0003723">
    <property type="term" value="F:RNA binding"/>
    <property type="evidence" value="ECO:0007669"/>
    <property type="project" value="TreeGrafter"/>
</dbReference>
<dbReference type="GO" id="GO:0003735">
    <property type="term" value="F:structural constituent of ribosome"/>
    <property type="evidence" value="ECO:0007669"/>
    <property type="project" value="InterPro"/>
</dbReference>
<dbReference type="GO" id="GO:0006412">
    <property type="term" value="P:translation"/>
    <property type="evidence" value="ECO:0007669"/>
    <property type="project" value="UniProtKB-UniRule"/>
</dbReference>
<dbReference type="FunFam" id="3.30.230.10:FF:000025">
    <property type="entry name" value="30S ribosomal protein S9"/>
    <property type="match status" value="1"/>
</dbReference>
<dbReference type="Gene3D" id="3.30.230.10">
    <property type="match status" value="1"/>
</dbReference>
<dbReference type="HAMAP" id="MF_00532_B">
    <property type="entry name" value="Ribosomal_uS9_B"/>
    <property type="match status" value="1"/>
</dbReference>
<dbReference type="InterPro" id="IPR020568">
    <property type="entry name" value="Ribosomal_Su5_D2-typ_SF"/>
</dbReference>
<dbReference type="InterPro" id="IPR000754">
    <property type="entry name" value="Ribosomal_uS9"/>
</dbReference>
<dbReference type="InterPro" id="IPR023035">
    <property type="entry name" value="Ribosomal_uS9_bac/plastid"/>
</dbReference>
<dbReference type="InterPro" id="IPR020574">
    <property type="entry name" value="Ribosomal_uS9_CS"/>
</dbReference>
<dbReference type="InterPro" id="IPR014721">
    <property type="entry name" value="Ribsml_uS5_D2-typ_fold_subgr"/>
</dbReference>
<dbReference type="NCBIfam" id="NF001099">
    <property type="entry name" value="PRK00132.1"/>
    <property type="match status" value="1"/>
</dbReference>
<dbReference type="PANTHER" id="PTHR21569">
    <property type="entry name" value="RIBOSOMAL PROTEIN S9"/>
    <property type="match status" value="1"/>
</dbReference>
<dbReference type="PANTHER" id="PTHR21569:SF1">
    <property type="entry name" value="SMALL RIBOSOMAL SUBUNIT PROTEIN US9M"/>
    <property type="match status" value="1"/>
</dbReference>
<dbReference type="Pfam" id="PF00380">
    <property type="entry name" value="Ribosomal_S9"/>
    <property type="match status" value="1"/>
</dbReference>
<dbReference type="SUPFAM" id="SSF54211">
    <property type="entry name" value="Ribosomal protein S5 domain 2-like"/>
    <property type="match status" value="1"/>
</dbReference>
<dbReference type="PROSITE" id="PS00360">
    <property type="entry name" value="RIBOSOMAL_S9"/>
    <property type="match status" value="1"/>
</dbReference>
<comment type="similarity">
    <text evidence="1">Belongs to the universal ribosomal protein uS9 family.</text>
</comment>
<accession>P66638</accession>
<accession>P56016</accession>
<sequence>MRKIYATGKRKTAIAKVWLTPGKGELSINEQSLNQWLGGHEAIKMKVMQPLLLTKQEQSVDIKAVVFGGGYSAQAEALRHGISKALNAYDIAFRAILKPKGLLTRDSRVVERKKYGKRKARRSPQFSKR</sequence>
<gene>
    <name type="primary">rpsI</name>
    <name type="ordered locus">jhp_0076</name>
</gene>
<feature type="chain" id="PRO_0000111365" description="Small ribosomal subunit protein uS9">
    <location>
        <begin position="1"/>
        <end position="129"/>
    </location>
</feature>
<proteinExistence type="inferred from homology"/>
<evidence type="ECO:0000305" key="1"/>
<name>RS9_HELPJ</name>
<reference key="1">
    <citation type="journal article" date="1999" name="Nature">
        <title>Genomic sequence comparison of two unrelated isolates of the human gastric pathogen Helicobacter pylori.</title>
        <authorList>
            <person name="Alm R.A."/>
            <person name="Ling L.-S.L."/>
            <person name="Moir D.T."/>
            <person name="King B.L."/>
            <person name="Brown E.D."/>
            <person name="Doig P.C."/>
            <person name="Smith D.R."/>
            <person name="Noonan B."/>
            <person name="Guild B.C."/>
            <person name="deJonge B.L."/>
            <person name="Carmel G."/>
            <person name="Tummino P.J."/>
            <person name="Caruso A."/>
            <person name="Uria-Nickelsen M."/>
            <person name="Mills D.M."/>
            <person name="Ives C."/>
            <person name="Gibson R."/>
            <person name="Merberg D."/>
            <person name="Mills S.D."/>
            <person name="Jiang Q."/>
            <person name="Taylor D.E."/>
            <person name="Vovis G.F."/>
            <person name="Trust T.J."/>
        </authorList>
    </citation>
    <scope>NUCLEOTIDE SEQUENCE [LARGE SCALE GENOMIC DNA]</scope>
    <source>
        <strain>J99 / ATCC 700824</strain>
    </source>
</reference>
<protein>
    <recommendedName>
        <fullName evidence="1">Small ribosomal subunit protein uS9</fullName>
    </recommendedName>
    <alternativeName>
        <fullName>30S ribosomal protein S9</fullName>
    </alternativeName>
</protein>
<keyword id="KW-0687">Ribonucleoprotein</keyword>
<keyword id="KW-0689">Ribosomal protein</keyword>
<organism>
    <name type="scientific">Helicobacter pylori (strain J99 / ATCC 700824)</name>
    <name type="common">Campylobacter pylori J99</name>
    <dbReference type="NCBI Taxonomy" id="85963"/>
    <lineage>
        <taxon>Bacteria</taxon>
        <taxon>Pseudomonadati</taxon>
        <taxon>Campylobacterota</taxon>
        <taxon>Epsilonproteobacteria</taxon>
        <taxon>Campylobacterales</taxon>
        <taxon>Helicobacteraceae</taxon>
        <taxon>Helicobacter</taxon>
    </lineage>
</organism>